<gene>
    <name evidence="1" type="primary">MT-ATP6</name>
    <name type="synonym">ATP6</name>
    <name type="synonym">ATPASE6</name>
    <name type="synonym">MTATP6</name>
</gene>
<organism>
    <name type="scientific">Equus asinus</name>
    <name type="common">Donkey</name>
    <name type="synonym">Equus africanus asinus</name>
    <dbReference type="NCBI Taxonomy" id="9793"/>
    <lineage>
        <taxon>Eukaryota</taxon>
        <taxon>Metazoa</taxon>
        <taxon>Chordata</taxon>
        <taxon>Craniata</taxon>
        <taxon>Vertebrata</taxon>
        <taxon>Euteleostomi</taxon>
        <taxon>Mammalia</taxon>
        <taxon>Eutheria</taxon>
        <taxon>Laurasiatheria</taxon>
        <taxon>Perissodactyla</taxon>
        <taxon>Equidae</taxon>
        <taxon>Equus</taxon>
    </lineage>
</organism>
<geneLocation type="mitochondrion"/>
<proteinExistence type="inferred from homology"/>
<protein>
    <recommendedName>
        <fullName evidence="1">ATP synthase F(0) complex subunit a</fullName>
    </recommendedName>
    <alternativeName>
        <fullName>F-ATPase protein 6</fullName>
    </alternativeName>
    <alternativeName>
        <fullName evidence="1">Proton-conducting channel, ATP synthase F(0) complex subunit a</fullName>
    </alternativeName>
</protein>
<accession>P92480</accession>
<comment type="function">
    <text evidence="1">Subunit a, of the mitochondrial membrane ATP synthase complex (F(1)F(0) ATP synthase or Complex V) that produces ATP from ADP in the presence of a proton gradient across the membrane which is generated by electron transport complexes of the respiratory chain. ATP synthase complex consist of a soluble F(1) head domain - the catalytic core - and a membrane F(1) domain - the membrane proton channel. These two domains are linked by a central stalk rotating inside the F(1) region and a stationary peripheral stalk. During catalysis, ATP synthesis in the catalytic domain of F(1) is coupled via a rotary mechanism of the central stalk subunits to proton translocation. With the subunit c (ATP5MC1), forms the proton-conducting channel in the F(0) domain, that contains two crucial half-channels (inlet and outlet) that facilitate proton movement from the mitochondrial intermembrane space (IMS) into the matrix. Protons are taken up via the inlet half-channel and released through the outlet half-channel, following a Grotthuss mechanism.</text>
</comment>
<comment type="catalytic activity">
    <reaction evidence="1">
        <text>H(+)(in) = H(+)(out)</text>
        <dbReference type="Rhea" id="RHEA:34979"/>
        <dbReference type="ChEBI" id="CHEBI:15378"/>
    </reaction>
</comment>
<comment type="subunit">
    <text evidence="1">Component of the ATP synthase complex composed at least of ATP5F1A/subunit alpha, ATP5F1B/subunit beta, ATP5MC1/subunit c (homooctomer), MT-ATP6/subunit a, MT-ATP8/subunit 8, ATP5ME/subunit e, ATP5MF/subunit f, ATP5MG/subunit g, ATP5MK/subunit k, ATP5MJ/subunit j, ATP5F1C/subunit gamma, ATP5F1D/subunit delta, ATP5F1E/subunit epsilon, ATP5PF/subunit F6, ATP5PB/subunit b, ATP5PD/subunit d, ATP5PO/subunit OSCP. ATP synthase complex consists of a soluble F(1) head domain (subunits alpha(3) and beta(3)) - the catalytic core - and a membrane F(0) domain - the membrane proton channel (subunits c, a, 8, e, f, g, k and j). These two domains are linked by a central stalk (subunits gamma, delta, and epsilon) rotating inside the F1 region and a stationary peripheral stalk (subunits F6, b, d, and OSCP). Interacts with DNAJC30; interaction is direct.</text>
</comment>
<comment type="subcellular location">
    <subcellularLocation>
        <location>Mitochondrion inner membrane</location>
        <topology>Multi-pass membrane protein</topology>
    </subcellularLocation>
</comment>
<comment type="similarity">
    <text evidence="3">Belongs to the ATPase A chain family.</text>
</comment>
<evidence type="ECO:0000250" key="1">
    <source>
        <dbReference type="UniProtKB" id="P00846"/>
    </source>
</evidence>
<evidence type="ECO:0000255" key="2"/>
<evidence type="ECO:0000305" key="3"/>
<reference key="1">
    <citation type="journal article" date="1996" name="J. Mol. Evol.">
        <title>The complete mitochondrial DNA (mtDNA) of the donkey and mtDNA comparisons among four closely related mammalian species-pairs.</title>
        <authorList>
            <person name="Xu X."/>
            <person name="Gullberg A."/>
            <person name="Arnason U."/>
        </authorList>
    </citation>
    <scope>NUCLEOTIDE SEQUENCE [GENOMIC DNA]</scope>
    <source>
        <tissue>Kidney</tissue>
    </source>
</reference>
<feature type="chain" id="PRO_0000082120" description="ATP synthase F(0) complex subunit a">
    <location>
        <begin position="1"/>
        <end position="226"/>
    </location>
</feature>
<feature type="transmembrane region" description="Helical" evidence="2">
    <location>
        <begin position="12"/>
        <end position="32"/>
    </location>
</feature>
<feature type="transmembrane region" description="Helical" evidence="2">
    <location>
        <begin position="68"/>
        <end position="88"/>
    </location>
</feature>
<feature type="transmembrane region" description="Helical" evidence="2">
    <location>
        <begin position="97"/>
        <end position="117"/>
    </location>
</feature>
<feature type="transmembrane region" description="Helical" evidence="2">
    <location>
        <begin position="135"/>
        <end position="155"/>
    </location>
</feature>
<feature type="transmembrane region" description="Helical" evidence="2">
    <location>
        <begin position="164"/>
        <end position="184"/>
    </location>
</feature>
<feature type="transmembrane region" description="Helical" evidence="2">
    <location>
        <begin position="189"/>
        <end position="209"/>
    </location>
</feature>
<keyword id="KW-0066">ATP synthesis</keyword>
<keyword id="KW-0138">CF(0)</keyword>
<keyword id="KW-0375">Hydrogen ion transport</keyword>
<keyword id="KW-0406">Ion transport</keyword>
<keyword id="KW-0472">Membrane</keyword>
<keyword id="KW-0496">Mitochondrion</keyword>
<keyword id="KW-0999">Mitochondrion inner membrane</keyword>
<keyword id="KW-1185">Reference proteome</keyword>
<keyword id="KW-0812">Transmembrane</keyword>
<keyword id="KW-1133">Transmembrane helix</keyword>
<keyword id="KW-0813">Transport</keyword>
<sequence length="226" mass="24987">MNENLFASFATPTMMGLPIVILIIMFPSILFPSSNRLINNRLISIQQWLVQLTSKQMMTIHNNKGQTWTLMLMSLILFIGSTNLLGLLPHSFTPTTQLSMNLGMAIPLWAGTVFMGFRHKTKAALAHFLPQGTPIFLIPMLVIIETISLFIQPMALAVRLTANITAGHLLIHLIGGATLALMDISPSTALITFIILILLTILEFAVAMIQAYVFTLLVSLYLHDNT</sequence>
<dbReference type="EMBL" id="X97337">
    <property type="protein sequence ID" value="CAA66019.1"/>
    <property type="molecule type" value="Genomic_DNA"/>
</dbReference>
<dbReference type="PIR" id="T11368">
    <property type="entry name" value="T11368"/>
</dbReference>
<dbReference type="RefSeq" id="NP_007386.1">
    <property type="nucleotide sequence ID" value="NC_001788.1"/>
</dbReference>
<dbReference type="SMR" id="P92480"/>
<dbReference type="GeneID" id="808063"/>
<dbReference type="KEGG" id="eai:808063"/>
<dbReference type="CTD" id="4508"/>
<dbReference type="Proteomes" id="UP000694387">
    <property type="component" value="Mitochondrion MT"/>
</dbReference>
<dbReference type="GO" id="GO:0005743">
    <property type="term" value="C:mitochondrial inner membrane"/>
    <property type="evidence" value="ECO:0007669"/>
    <property type="project" value="UniProtKB-SubCell"/>
</dbReference>
<dbReference type="GO" id="GO:0045259">
    <property type="term" value="C:proton-transporting ATP synthase complex"/>
    <property type="evidence" value="ECO:0000250"/>
    <property type="project" value="UniProtKB"/>
</dbReference>
<dbReference type="GO" id="GO:0015252">
    <property type="term" value="F:proton channel activity"/>
    <property type="evidence" value="ECO:0000250"/>
    <property type="project" value="UniProtKB"/>
</dbReference>
<dbReference type="GO" id="GO:0046933">
    <property type="term" value="F:proton-transporting ATP synthase activity, rotational mechanism"/>
    <property type="evidence" value="ECO:0007669"/>
    <property type="project" value="TreeGrafter"/>
</dbReference>
<dbReference type="GO" id="GO:0015986">
    <property type="term" value="P:proton motive force-driven ATP synthesis"/>
    <property type="evidence" value="ECO:0000250"/>
    <property type="project" value="UniProtKB"/>
</dbReference>
<dbReference type="GO" id="GO:1902600">
    <property type="term" value="P:proton transmembrane transport"/>
    <property type="evidence" value="ECO:0000250"/>
    <property type="project" value="UniProtKB"/>
</dbReference>
<dbReference type="CDD" id="cd00310">
    <property type="entry name" value="ATP-synt_Fo_a_6"/>
    <property type="match status" value="1"/>
</dbReference>
<dbReference type="FunFam" id="1.20.120.220:FF:000004">
    <property type="entry name" value="ATP synthase subunit a"/>
    <property type="match status" value="1"/>
</dbReference>
<dbReference type="Gene3D" id="1.20.120.220">
    <property type="entry name" value="ATP synthase, F0 complex, subunit A"/>
    <property type="match status" value="1"/>
</dbReference>
<dbReference type="InterPro" id="IPR000568">
    <property type="entry name" value="ATP_synth_F0_asu"/>
</dbReference>
<dbReference type="InterPro" id="IPR023011">
    <property type="entry name" value="ATP_synth_F0_asu_AS"/>
</dbReference>
<dbReference type="InterPro" id="IPR045083">
    <property type="entry name" value="ATP_synth_F0_asu_bact/mt"/>
</dbReference>
<dbReference type="InterPro" id="IPR035908">
    <property type="entry name" value="F0_ATP_A_sf"/>
</dbReference>
<dbReference type="NCBIfam" id="TIGR01131">
    <property type="entry name" value="ATP_synt_6_or_A"/>
    <property type="match status" value="1"/>
</dbReference>
<dbReference type="PANTHER" id="PTHR11410">
    <property type="entry name" value="ATP SYNTHASE SUBUNIT A"/>
    <property type="match status" value="1"/>
</dbReference>
<dbReference type="PANTHER" id="PTHR11410:SF0">
    <property type="entry name" value="ATP SYNTHASE SUBUNIT A"/>
    <property type="match status" value="1"/>
</dbReference>
<dbReference type="Pfam" id="PF00119">
    <property type="entry name" value="ATP-synt_A"/>
    <property type="match status" value="1"/>
</dbReference>
<dbReference type="PRINTS" id="PR00123">
    <property type="entry name" value="ATPASEA"/>
</dbReference>
<dbReference type="SUPFAM" id="SSF81336">
    <property type="entry name" value="F1F0 ATP synthase subunit A"/>
    <property type="match status" value="1"/>
</dbReference>
<dbReference type="PROSITE" id="PS00449">
    <property type="entry name" value="ATPASE_A"/>
    <property type="match status" value="1"/>
</dbReference>
<name>ATP6_EQUAS</name>